<feature type="chain" id="PRO_1000195980" description="Large ribosomal subunit protein bL32">
    <location>
        <begin position="1"/>
        <end position="59"/>
    </location>
</feature>
<feature type="region of interest" description="Disordered" evidence="2">
    <location>
        <begin position="1"/>
        <end position="59"/>
    </location>
</feature>
<feature type="compositionally biased region" description="Basic residues" evidence="2">
    <location>
        <begin position="49"/>
        <end position="59"/>
    </location>
</feature>
<comment type="similarity">
    <text evidence="1">Belongs to the bacterial ribosomal protein bL32 family.</text>
</comment>
<proteinExistence type="inferred from homology"/>
<organism>
    <name type="scientific">Laribacter hongkongensis (strain HLHK9)</name>
    <dbReference type="NCBI Taxonomy" id="557598"/>
    <lineage>
        <taxon>Bacteria</taxon>
        <taxon>Pseudomonadati</taxon>
        <taxon>Pseudomonadota</taxon>
        <taxon>Betaproteobacteria</taxon>
        <taxon>Neisseriales</taxon>
        <taxon>Aquaspirillaceae</taxon>
        <taxon>Laribacter</taxon>
    </lineage>
</organism>
<evidence type="ECO:0000255" key="1">
    <source>
        <dbReference type="HAMAP-Rule" id="MF_00340"/>
    </source>
</evidence>
<evidence type="ECO:0000256" key="2">
    <source>
        <dbReference type="SAM" id="MobiDB-lite"/>
    </source>
</evidence>
<evidence type="ECO:0000305" key="3"/>
<accession>C1DCF0</accession>
<dbReference type="EMBL" id="CP001154">
    <property type="protein sequence ID" value="ACO73567.1"/>
    <property type="molecule type" value="Genomic_DNA"/>
</dbReference>
<dbReference type="RefSeq" id="WP_012696059.1">
    <property type="nucleotide sequence ID" value="NC_012559.1"/>
</dbReference>
<dbReference type="SMR" id="C1DCF0"/>
<dbReference type="STRING" id="557598.LHK_00574"/>
<dbReference type="GeneID" id="75108919"/>
<dbReference type="KEGG" id="lhk:LHK_00574"/>
<dbReference type="eggNOG" id="COG0333">
    <property type="taxonomic scope" value="Bacteria"/>
</dbReference>
<dbReference type="HOGENOM" id="CLU_129084_2_1_4"/>
<dbReference type="Proteomes" id="UP000002010">
    <property type="component" value="Chromosome"/>
</dbReference>
<dbReference type="GO" id="GO:0015934">
    <property type="term" value="C:large ribosomal subunit"/>
    <property type="evidence" value="ECO:0007669"/>
    <property type="project" value="InterPro"/>
</dbReference>
<dbReference type="GO" id="GO:0003735">
    <property type="term" value="F:structural constituent of ribosome"/>
    <property type="evidence" value="ECO:0007669"/>
    <property type="project" value="InterPro"/>
</dbReference>
<dbReference type="GO" id="GO:0006412">
    <property type="term" value="P:translation"/>
    <property type="evidence" value="ECO:0007669"/>
    <property type="project" value="UniProtKB-UniRule"/>
</dbReference>
<dbReference type="HAMAP" id="MF_00340">
    <property type="entry name" value="Ribosomal_bL32"/>
    <property type="match status" value="1"/>
</dbReference>
<dbReference type="InterPro" id="IPR002677">
    <property type="entry name" value="Ribosomal_bL32"/>
</dbReference>
<dbReference type="InterPro" id="IPR044957">
    <property type="entry name" value="Ribosomal_bL32_bact"/>
</dbReference>
<dbReference type="InterPro" id="IPR011332">
    <property type="entry name" value="Ribosomal_zn-bd"/>
</dbReference>
<dbReference type="NCBIfam" id="TIGR01031">
    <property type="entry name" value="rpmF_bact"/>
    <property type="match status" value="1"/>
</dbReference>
<dbReference type="PANTHER" id="PTHR35534">
    <property type="entry name" value="50S RIBOSOMAL PROTEIN L32"/>
    <property type="match status" value="1"/>
</dbReference>
<dbReference type="PANTHER" id="PTHR35534:SF1">
    <property type="entry name" value="LARGE RIBOSOMAL SUBUNIT PROTEIN BL32"/>
    <property type="match status" value="1"/>
</dbReference>
<dbReference type="Pfam" id="PF01783">
    <property type="entry name" value="Ribosomal_L32p"/>
    <property type="match status" value="1"/>
</dbReference>
<dbReference type="SUPFAM" id="SSF57829">
    <property type="entry name" value="Zn-binding ribosomal proteins"/>
    <property type="match status" value="1"/>
</dbReference>
<gene>
    <name evidence="1" type="primary">rpmF</name>
    <name type="ordered locus">LHK_00574</name>
</gene>
<reference key="1">
    <citation type="journal article" date="2009" name="PLoS Genet.">
        <title>The complete genome and proteome of Laribacter hongkongensis reveal potential mechanisms for adaptations to different temperatures and habitats.</title>
        <authorList>
            <person name="Woo P.C.Y."/>
            <person name="Lau S.K.P."/>
            <person name="Tse H."/>
            <person name="Teng J.L.L."/>
            <person name="Curreem S.O."/>
            <person name="Tsang A.K.L."/>
            <person name="Fan R.Y.Y."/>
            <person name="Wong G.K.M."/>
            <person name="Huang Y."/>
            <person name="Loman N.J."/>
            <person name="Snyder L.A.S."/>
            <person name="Cai J.J."/>
            <person name="Huang J.-D."/>
            <person name="Mak W."/>
            <person name="Pallen M.J."/>
            <person name="Lok S."/>
            <person name="Yuen K.-Y."/>
        </authorList>
    </citation>
    <scope>NUCLEOTIDE SEQUENCE [LARGE SCALE GENOMIC DNA]</scope>
    <source>
        <strain>HLHK9</strain>
    </source>
</reference>
<protein>
    <recommendedName>
        <fullName evidence="1">Large ribosomal subunit protein bL32</fullName>
    </recommendedName>
    <alternativeName>
        <fullName evidence="3">50S ribosomal protein L32</fullName>
    </alternativeName>
</protein>
<sequence length="59" mass="6661">MAVQQNKKSPSKRGMHRAHDFLTAPVIAIEPSTGEAHRRHHISPNGFYRGRKVVKGKDE</sequence>
<name>RL32_LARHH</name>
<keyword id="KW-1185">Reference proteome</keyword>
<keyword id="KW-0687">Ribonucleoprotein</keyword>
<keyword id="KW-0689">Ribosomal protein</keyword>